<protein>
    <recommendedName>
        <fullName>Omega-conotoxin-like Bu11</fullName>
    </recommendedName>
</protein>
<feature type="signal peptide" evidence="2">
    <location>
        <begin position="1" status="less than"/>
        <end position="7"/>
    </location>
</feature>
<feature type="propeptide" id="PRO_0000409954" evidence="1">
    <location>
        <begin position="8"/>
        <end position="27"/>
    </location>
</feature>
<feature type="peptide" id="PRO_0000409955" description="Omega-conotoxin-like Bu11">
    <location>
        <begin position="28"/>
        <end position="62"/>
    </location>
</feature>
<feature type="disulfide bond" evidence="1">
    <location>
        <begin position="31"/>
        <end position="46"/>
    </location>
</feature>
<feature type="disulfide bond" evidence="1">
    <location>
        <begin position="38"/>
        <end position="49"/>
    </location>
</feature>
<feature type="disulfide bond" evidence="1">
    <location>
        <begin position="45"/>
        <end position="56"/>
    </location>
</feature>
<feature type="non-terminal residue">
    <location>
        <position position="1"/>
    </location>
</feature>
<reference key="1">
    <citation type="journal article" date="2011" name="BMC Genomics">
        <title>Characterization of the Conus bullatus genome and its venom-duct transcriptome.</title>
        <authorList>
            <person name="Hu H."/>
            <person name="Bandyopadhyay P.K."/>
            <person name="Olivera B.M."/>
            <person name="Yandell M."/>
        </authorList>
    </citation>
    <scope>NUCLEOTIDE SEQUENCE [MRNA]</scope>
    <source>
        <tissue>Venom duct</tissue>
    </source>
</reference>
<accession>P0CY69</accession>
<proteinExistence type="evidence at transcript level"/>
<name>O17B_CONBU</name>
<organism>
    <name type="scientific">Conus bullatus</name>
    <name type="common">Bubble cone</name>
    <dbReference type="NCBI Taxonomy" id="89438"/>
    <lineage>
        <taxon>Eukaryota</taxon>
        <taxon>Metazoa</taxon>
        <taxon>Spiralia</taxon>
        <taxon>Lophotrochozoa</taxon>
        <taxon>Mollusca</taxon>
        <taxon>Gastropoda</taxon>
        <taxon>Caenogastropoda</taxon>
        <taxon>Neogastropoda</taxon>
        <taxon>Conoidea</taxon>
        <taxon>Conidae</taxon>
        <taxon>Conus</taxon>
        <taxon>Textilia</taxon>
    </lineage>
</organism>
<sequence>ACQLITAEDSRGTQLHRALRSTSKVSKSTSCVEAGSYCRPNVKLCCGFCSPYSKICMNFPKN</sequence>
<keyword id="KW-0108">Calcium channel impairing toxin</keyword>
<keyword id="KW-1015">Disulfide bond</keyword>
<keyword id="KW-0872">Ion channel impairing toxin</keyword>
<keyword id="KW-0960">Knottin</keyword>
<keyword id="KW-0528">Neurotoxin</keyword>
<keyword id="KW-0964">Secreted</keyword>
<keyword id="KW-0732">Signal</keyword>
<keyword id="KW-0800">Toxin</keyword>
<keyword id="KW-1218">Voltage-gated calcium channel impairing toxin</keyword>
<dbReference type="SMR" id="P0CY69"/>
<dbReference type="GO" id="GO:0005576">
    <property type="term" value="C:extracellular region"/>
    <property type="evidence" value="ECO:0007669"/>
    <property type="project" value="UniProtKB-SubCell"/>
</dbReference>
<dbReference type="GO" id="GO:0005246">
    <property type="term" value="F:calcium channel regulator activity"/>
    <property type="evidence" value="ECO:0007669"/>
    <property type="project" value="UniProtKB-KW"/>
</dbReference>
<dbReference type="GO" id="GO:0090729">
    <property type="term" value="F:toxin activity"/>
    <property type="evidence" value="ECO:0007669"/>
    <property type="project" value="UniProtKB-KW"/>
</dbReference>
<comment type="function">
    <text evidence="1">Omega-conotoxins act at presynaptic membranes, they bind and block voltage-gated calcium channels (Cav).</text>
</comment>
<comment type="subcellular location">
    <subcellularLocation>
        <location evidence="1">Secreted</location>
    </subcellularLocation>
</comment>
<comment type="tissue specificity">
    <text>Expressed by the venom duct.</text>
</comment>
<comment type="domain">
    <text>The presence of a 'disulfide through disulfide knot' structurally defines this protein as a knottin.</text>
</comment>
<comment type="domain">
    <text>The cysteine framework is VI/VII (C-C-CC-C-C).</text>
</comment>
<comment type="similarity">
    <text evidence="3">Belongs to the conotoxin O1 superfamily.</text>
</comment>
<evidence type="ECO:0000250" key="1"/>
<evidence type="ECO:0000255" key="2"/>
<evidence type="ECO:0000305" key="3"/>